<proteinExistence type="evidence at protein level"/>
<protein>
    <recommendedName>
        <fullName evidence="1">Recombination protein RecR</fullName>
    </recommendedName>
</protein>
<feature type="chain" id="PRO_0000190398" description="Recombination protein RecR">
    <location>
        <begin position="1"/>
        <end position="198"/>
    </location>
</feature>
<feature type="domain" description="Toprim" evidence="1">
    <location>
        <begin position="80"/>
        <end position="175"/>
    </location>
</feature>
<feature type="zinc finger region" description="C4-type" evidence="1">
    <location>
        <begin position="57"/>
        <end position="72"/>
    </location>
</feature>
<organism>
    <name type="scientific">Streptococcus pneumoniae serotype 4 (strain ATCC BAA-334 / TIGR4)</name>
    <dbReference type="NCBI Taxonomy" id="170187"/>
    <lineage>
        <taxon>Bacteria</taxon>
        <taxon>Bacillati</taxon>
        <taxon>Bacillota</taxon>
        <taxon>Bacilli</taxon>
        <taxon>Lactobacillales</taxon>
        <taxon>Streptococcaceae</taxon>
        <taxon>Streptococcus</taxon>
    </lineage>
</organism>
<sequence length="198" mass="21689">MLYPTPIAKLIDSYSKLPGIGIKTATRLAFYTIGMSADDVNEFAKNLLSAKRELTYCSICGRLTDDDPCSICTDPTRDQTTILVLEDSRDVAAMENIQEYHGLYHVLHGLISPMNGISPDDINLKSLMTRLMDSEVSEVIVATNATADGEATSMYLSRLLKPAGIKVTRLARGLAVGADIEYADEVTLLRAIENRTEL</sequence>
<comment type="function">
    <text evidence="1">May play a role in DNA repair. It seems to be involved in an RecBC-independent recombinational process of DNA repair. It may act with RecF and RecO.</text>
</comment>
<comment type="interaction">
    <interactant intactId="EBI-11704359">
        <id>P0CB76</id>
    </interactant>
    <interactant intactId="EBI-11704355">
        <id>E7DNB5</id>
    </interactant>
    <organismsDiffer>true</organismsDiffer>
    <experiments>2</experiments>
</comment>
<comment type="similarity">
    <text evidence="1">Belongs to the RecR family.</text>
</comment>
<gene>
    <name evidence="1" type="primary">recR</name>
    <name type="synonym">recM</name>
    <name type="ordered locus">SP_1672</name>
</gene>
<name>RECR_STRPN</name>
<dbReference type="EMBL" id="AJ243056">
    <property type="protein sequence ID" value="CAB64474.1"/>
    <property type="molecule type" value="Genomic_DNA"/>
</dbReference>
<dbReference type="EMBL" id="AJ243057">
    <property type="protein sequence ID" value="CAB64478.1"/>
    <property type="molecule type" value="Genomic_DNA"/>
</dbReference>
<dbReference type="EMBL" id="AE005672">
    <property type="protein sequence ID" value="AAK75751.1"/>
    <property type="molecule type" value="Genomic_DNA"/>
</dbReference>
<dbReference type="PIR" id="F95194">
    <property type="entry name" value="F95194"/>
</dbReference>
<dbReference type="RefSeq" id="WP_000966743.1">
    <property type="nucleotide sequence ID" value="NZ_CP155539.1"/>
</dbReference>
<dbReference type="SMR" id="P0CB76"/>
<dbReference type="IntAct" id="P0CB76">
    <property type="interactions" value="1"/>
</dbReference>
<dbReference type="PaxDb" id="170187-SP_1672"/>
<dbReference type="EnsemblBacteria" id="AAK75751">
    <property type="protein sequence ID" value="AAK75751"/>
    <property type="gene ID" value="SP_1672"/>
</dbReference>
<dbReference type="GeneID" id="45653117"/>
<dbReference type="KEGG" id="spn:SP_1672"/>
<dbReference type="eggNOG" id="COG0353">
    <property type="taxonomic scope" value="Bacteria"/>
</dbReference>
<dbReference type="PhylomeDB" id="P0CB76"/>
<dbReference type="BioCyc" id="SPNE170187:G1FZB-1693-MONOMER"/>
<dbReference type="Proteomes" id="UP000000585">
    <property type="component" value="Chromosome"/>
</dbReference>
<dbReference type="GO" id="GO:0003677">
    <property type="term" value="F:DNA binding"/>
    <property type="evidence" value="ECO:0007669"/>
    <property type="project" value="UniProtKB-UniRule"/>
</dbReference>
<dbReference type="GO" id="GO:0008270">
    <property type="term" value="F:zinc ion binding"/>
    <property type="evidence" value="ECO:0007669"/>
    <property type="project" value="UniProtKB-KW"/>
</dbReference>
<dbReference type="GO" id="GO:0006310">
    <property type="term" value="P:DNA recombination"/>
    <property type="evidence" value="ECO:0007669"/>
    <property type="project" value="UniProtKB-UniRule"/>
</dbReference>
<dbReference type="GO" id="GO:0006281">
    <property type="term" value="P:DNA repair"/>
    <property type="evidence" value="ECO:0007669"/>
    <property type="project" value="UniProtKB-UniRule"/>
</dbReference>
<dbReference type="CDD" id="cd01025">
    <property type="entry name" value="TOPRIM_recR"/>
    <property type="match status" value="1"/>
</dbReference>
<dbReference type="Gene3D" id="3.30.60.80">
    <property type="match status" value="1"/>
</dbReference>
<dbReference type="Gene3D" id="3.40.1360.10">
    <property type="match status" value="1"/>
</dbReference>
<dbReference type="Gene3D" id="6.10.250.240">
    <property type="match status" value="1"/>
</dbReference>
<dbReference type="Gene3D" id="1.10.8.420">
    <property type="entry name" value="RecR Domain 1"/>
    <property type="match status" value="1"/>
</dbReference>
<dbReference type="HAMAP" id="MF_00017">
    <property type="entry name" value="RecR"/>
    <property type="match status" value="1"/>
</dbReference>
<dbReference type="InterPro" id="IPR000093">
    <property type="entry name" value="DNA_Rcmb_RecR"/>
</dbReference>
<dbReference type="InterPro" id="IPR023627">
    <property type="entry name" value="Rcmb_RecR"/>
</dbReference>
<dbReference type="InterPro" id="IPR015967">
    <property type="entry name" value="Rcmb_RecR_Znf"/>
</dbReference>
<dbReference type="InterPro" id="IPR006171">
    <property type="entry name" value="TOPRIM_dom"/>
</dbReference>
<dbReference type="InterPro" id="IPR034137">
    <property type="entry name" value="TOPRIM_RecR"/>
</dbReference>
<dbReference type="NCBIfam" id="TIGR00615">
    <property type="entry name" value="recR"/>
    <property type="match status" value="1"/>
</dbReference>
<dbReference type="PANTHER" id="PTHR30446">
    <property type="entry name" value="RECOMBINATION PROTEIN RECR"/>
    <property type="match status" value="1"/>
</dbReference>
<dbReference type="PANTHER" id="PTHR30446:SF0">
    <property type="entry name" value="RECOMBINATION PROTEIN RECR"/>
    <property type="match status" value="1"/>
</dbReference>
<dbReference type="Pfam" id="PF21175">
    <property type="entry name" value="RecR_C"/>
    <property type="match status" value="1"/>
</dbReference>
<dbReference type="Pfam" id="PF21176">
    <property type="entry name" value="RecR_HhH"/>
    <property type="match status" value="1"/>
</dbReference>
<dbReference type="Pfam" id="PF02132">
    <property type="entry name" value="RecR_ZnF"/>
    <property type="match status" value="1"/>
</dbReference>
<dbReference type="Pfam" id="PF13662">
    <property type="entry name" value="Toprim_4"/>
    <property type="match status" value="1"/>
</dbReference>
<dbReference type="SMART" id="SM00493">
    <property type="entry name" value="TOPRIM"/>
    <property type="match status" value="1"/>
</dbReference>
<dbReference type="SUPFAM" id="SSF111304">
    <property type="entry name" value="Recombination protein RecR"/>
    <property type="match status" value="1"/>
</dbReference>
<dbReference type="PROSITE" id="PS01300">
    <property type="entry name" value="RECR"/>
    <property type="match status" value="1"/>
</dbReference>
<dbReference type="PROSITE" id="PS50880">
    <property type="entry name" value="TOPRIM"/>
    <property type="match status" value="1"/>
</dbReference>
<accession>P0CB76</accession>
<accession>P0A453</accession>
<accession>Q9ZHC4</accession>
<reference key="1">
    <citation type="journal article" date="1999" name="Mol. Biol. Evol.">
        <title>Extensive variation in the ddl gene of penicillin-resistant Streptococcus pneumoniae results from a hitchhiking effect driven by the penicillin-binding protein 2b gene.</title>
        <authorList>
            <person name="Enright M.C."/>
            <person name="Spratt B.G."/>
        </authorList>
    </citation>
    <scope>NUCLEOTIDE SEQUENCE [GENOMIC DNA]</scope>
    <source>
        <strain>339</strain>
        <strain>PN94-661</strain>
    </source>
</reference>
<reference key="2">
    <citation type="journal article" date="2001" name="Science">
        <title>Complete genome sequence of a virulent isolate of Streptococcus pneumoniae.</title>
        <authorList>
            <person name="Tettelin H."/>
            <person name="Nelson K.E."/>
            <person name="Paulsen I.T."/>
            <person name="Eisen J.A."/>
            <person name="Read T.D."/>
            <person name="Peterson S.N."/>
            <person name="Heidelberg J.F."/>
            <person name="DeBoy R.T."/>
            <person name="Haft D.H."/>
            <person name="Dodson R.J."/>
            <person name="Durkin A.S."/>
            <person name="Gwinn M.L."/>
            <person name="Kolonay J.F."/>
            <person name="Nelson W.C."/>
            <person name="Peterson J.D."/>
            <person name="Umayam L.A."/>
            <person name="White O."/>
            <person name="Salzberg S.L."/>
            <person name="Lewis M.R."/>
            <person name="Radune D."/>
            <person name="Holtzapple E.K."/>
            <person name="Khouri H.M."/>
            <person name="Wolf A.M."/>
            <person name="Utterback T.R."/>
            <person name="Hansen C.L."/>
            <person name="McDonald L.A."/>
            <person name="Feldblyum T.V."/>
            <person name="Angiuoli S.V."/>
            <person name="Dickinson T."/>
            <person name="Hickey E.K."/>
            <person name="Holt I.E."/>
            <person name="Loftus B.J."/>
            <person name="Yang F."/>
            <person name="Smith H.O."/>
            <person name="Venter J.C."/>
            <person name="Dougherty B.A."/>
            <person name="Morrison D.A."/>
            <person name="Hollingshead S.K."/>
            <person name="Fraser C.M."/>
        </authorList>
    </citation>
    <scope>NUCLEOTIDE SEQUENCE [LARGE SCALE GENOMIC DNA]</scope>
    <source>
        <strain>ATCC BAA-334 / TIGR4</strain>
    </source>
</reference>
<evidence type="ECO:0000255" key="1">
    <source>
        <dbReference type="HAMAP-Rule" id="MF_00017"/>
    </source>
</evidence>
<keyword id="KW-0227">DNA damage</keyword>
<keyword id="KW-0233">DNA recombination</keyword>
<keyword id="KW-0234">DNA repair</keyword>
<keyword id="KW-0479">Metal-binding</keyword>
<keyword id="KW-1185">Reference proteome</keyword>
<keyword id="KW-0862">Zinc</keyword>
<keyword id="KW-0863">Zinc-finger</keyword>